<sequence>MLARSRVCLQTITRRLADFPEANAIKKKFLFRKDTSTIKQLKGLSSGQKIVLNGWIEQKPKRVGKNLIFGLLRDSNGDIIQLVDNKSLLKGFTLEDVVQAVGILSLKRKLSNEDADEYEVQLEDITVLNASNKKPAQMQDFKLSAIYPPEFRYLQLRNPKYQDFLKKRSSISKEIRNSFNNFDFTEVETPMLFKATPEGAREFLVPTRTKRSDGKPSFYALDQSPQQYKQLLMASGVNKYYQMARCFRDEDLRADRQPEFTQVDMEMAFANSEDVMKIIEKTVSGVWSKFSKKRGLLTLDSKGTLVPAKKENGTVSIFRMTYEQAMTSYGIDKPDLRAPDLKIINLGEFNAFSHLNKKFPVFEVIILRSAFSNMEEYKERWSFLTNNSNYNYRVPIVLPIENDEQANSNWFENFHAIATFENPHLITKFLKLKKGDIVCGCTREPNHSIFENPTPLGRLRQLVLQSEHGKNIYHAVNKDVASWIVDFPLFSPVIIEDKSGKKEKLAYPEYEKDRLCSTHHPFTMVKLKDYEKLEKTPEKCLGRHYDLVVNGVELGGGSTRIHDPRLQDYIFEDILKIDNAYELFGHLLNAFDMGTPPHAGFAIGFDRMCAMICETESIRDVIAFPKSITGADLVVKSPSVIPESILEPYNIKYSNSKK</sequence>
<comment type="function">
    <text evidence="3">Catalyzes the attachment of aspartate to tRNA(Asp) in the mitochondrion.</text>
</comment>
<comment type="catalytic activity">
    <reaction evidence="5">
        <text>tRNA(Asp) + L-aspartate + ATP = L-aspartyl-tRNA(Asp) + AMP + diphosphate</text>
        <dbReference type="Rhea" id="RHEA:19649"/>
        <dbReference type="Rhea" id="RHEA-COMP:9660"/>
        <dbReference type="Rhea" id="RHEA-COMP:9678"/>
        <dbReference type="ChEBI" id="CHEBI:29991"/>
        <dbReference type="ChEBI" id="CHEBI:30616"/>
        <dbReference type="ChEBI" id="CHEBI:33019"/>
        <dbReference type="ChEBI" id="CHEBI:78442"/>
        <dbReference type="ChEBI" id="CHEBI:78516"/>
        <dbReference type="ChEBI" id="CHEBI:456215"/>
        <dbReference type="EC" id="6.1.1.12"/>
    </reaction>
    <physiologicalReaction direction="left-to-right" evidence="5">
        <dbReference type="Rhea" id="RHEA:19650"/>
    </physiologicalReaction>
</comment>
<comment type="subcellular location">
    <subcellularLocation>
        <location evidence="5">Mitochondrion matrix</location>
    </subcellularLocation>
</comment>
<comment type="miscellaneous">
    <text evidence="2">Present with 1550 molecules/cell in log phase SD medium.</text>
</comment>
<comment type="similarity">
    <text evidence="4">Belongs to the class-II aminoacyl-tRNA synthetase family. Type 1 subfamily.</text>
</comment>
<proteinExistence type="evidence at protein level"/>
<dbReference type="EC" id="6.1.1.12" evidence="5"/>
<dbReference type="EMBL" id="M26020">
    <property type="protein sequence ID" value="AAA35137.1"/>
    <property type="molecule type" value="Genomic_DNA"/>
</dbReference>
<dbReference type="EMBL" id="M24418">
    <property type="protein sequence ID" value="AAA35173.1"/>
    <property type="molecule type" value="Genomic_DNA"/>
</dbReference>
<dbReference type="EMBL" id="U43281">
    <property type="protein sequence ID" value="AAB68196.1"/>
    <property type="molecule type" value="Genomic_DNA"/>
</dbReference>
<dbReference type="EMBL" id="BK006949">
    <property type="protein sequence ID" value="DAA11329.1"/>
    <property type="molecule type" value="Genomic_DNA"/>
</dbReference>
<dbReference type="PIR" id="S61963">
    <property type="entry name" value="SYBYDM"/>
</dbReference>
<dbReference type="RefSeq" id="NP_015221.1">
    <property type="nucleotide sequence ID" value="NM_001183918.1"/>
</dbReference>
<dbReference type="SMR" id="P15179"/>
<dbReference type="BioGRID" id="36077">
    <property type="interactions" value="90"/>
</dbReference>
<dbReference type="DIP" id="DIP-6339N"/>
<dbReference type="FunCoup" id="P15179">
    <property type="interactions" value="764"/>
</dbReference>
<dbReference type="IntAct" id="P15179">
    <property type="interactions" value="8"/>
</dbReference>
<dbReference type="STRING" id="4932.YPL104W"/>
<dbReference type="iPTMnet" id="P15179"/>
<dbReference type="PaxDb" id="4932-YPL104W"/>
<dbReference type="PeptideAtlas" id="P15179"/>
<dbReference type="EnsemblFungi" id="YPL104W_mRNA">
    <property type="protein sequence ID" value="YPL104W"/>
    <property type="gene ID" value="YPL104W"/>
</dbReference>
<dbReference type="GeneID" id="856000"/>
<dbReference type="KEGG" id="sce:YPL104W"/>
<dbReference type="AGR" id="SGD:S000006025"/>
<dbReference type="SGD" id="S000006025">
    <property type="gene designation" value="MSD1"/>
</dbReference>
<dbReference type="VEuPathDB" id="FungiDB:YPL104W"/>
<dbReference type="eggNOG" id="KOG2411">
    <property type="taxonomic scope" value="Eukaryota"/>
</dbReference>
<dbReference type="GeneTree" id="ENSGT01030000234618"/>
<dbReference type="HOGENOM" id="CLU_014330_4_1_1"/>
<dbReference type="InParanoid" id="P15179"/>
<dbReference type="OMA" id="LCGWVDR"/>
<dbReference type="OrthoDB" id="439710at2759"/>
<dbReference type="BioCyc" id="YEAST:G3O-34006-MONOMER"/>
<dbReference type="SABIO-RK" id="P15179"/>
<dbReference type="BioGRID-ORCS" id="856000">
    <property type="hits" value="0 hits in 10 CRISPR screens"/>
</dbReference>
<dbReference type="PRO" id="PR:P15179"/>
<dbReference type="Proteomes" id="UP000002311">
    <property type="component" value="Chromosome XVI"/>
</dbReference>
<dbReference type="RNAct" id="P15179">
    <property type="molecule type" value="protein"/>
</dbReference>
<dbReference type="GO" id="GO:0005759">
    <property type="term" value="C:mitochondrial matrix"/>
    <property type="evidence" value="ECO:0007669"/>
    <property type="project" value="UniProtKB-SubCell"/>
</dbReference>
<dbReference type="GO" id="GO:0005739">
    <property type="term" value="C:mitochondrion"/>
    <property type="evidence" value="ECO:0000315"/>
    <property type="project" value="SGD"/>
</dbReference>
<dbReference type="GO" id="GO:0004815">
    <property type="term" value="F:aspartate-tRNA ligase activity"/>
    <property type="evidence" value="ECO:0000315"/>
    <property type="project" value="SGD"/>
</dbReference>
<dbReference type="GO" id="GO:0005524">
    <property type="term" value="F:ATP binding"/>
    <property type="evidence" value="ECO:0007669"/>
    <property type="project" value="UniProtKB-KW"/>
</dbReference>
<dbReference type="GO" id="GO:0003676">
    <property type="term" value="F:nucleic acid binding"/>
    <property type="evidence" value="ECO:0007669"/>
    <property type="project" value="InterPro"/>
</dbReference>
<dbReference type="GO" id="GO:0006422">
    <property type="term" value="P:aspartyl-tRNA aminoacylation"/>
    <property type="evidence" value="ECO:0000318"/>
    <property type="project" value="GO_Central"/>
</dbReference>
<dbReference type="GO" id="GO:0070146">
    <property type="term" value="P:mitochondrial aspartyl-tRNA aminoacylation"/>
    <property type="evidence" value="ECO:0000315"/>
    <property type="project" value="SGD"/>
</dbReference>
<dbReference type="CDD" id="cd00777">
    <property type="entry name" value="AspRS_core"/>
    <property type="match status" value="1"/>
</dbReference>
<dbReference type="CDD" id="cd04321">
    <property type="entry name" value="ScAspRS_mt_like_N"/>
    <property type="match status" value="1"/>
</dbReference>
<dbReference type="Gene3D" id="3.30.930.10">
    <property type="entry name" value="Bira Bifunctional Protein, Domain 2"/>
    <property type="match status" value="1"/>
</dbReference>
<dbReference type="Gene3D" id="3.30.1360.30">
    <property type="entry name" value="GAD-like domain"/>
    <property type="match status" value="1"/>
</dbReference>
<dbReference type="Gene3D" id="2.40.50.140">
    <property type="entry name" value="Nucleic acid-binding proteins"/>
    <property type="match status" value="1"/>
</dbReference>
<dbReference type="HAMAP" id="MF_00044">
    <property type="entry name" value="Asp_tRNA_synth_type1"/>
    <property type="match status" value="1"/>
</dbReference>
<dbReference type="InterPro" id="IPR004364">
    <property type="entry name" value="Aa-tRNA-synt_II"/>
</dbReference>
<dbReference type="InterPro" id="IPR006195">
    <property type="entry name" value="aa-tRNA-synth_II"/>
</dbReference>
<dbReference type="InterPro" id="IPR045864">
    <property type="entry name" value="aa-tRNA-synth_II/BPL/LPL"/>
</dbReference>
<dbReference type="InterPro" id="IPR004524">
    <property type="entry name" value="Asp-tRNA-ligase_1"/>
</dbReference>
<dbReference type="InterPro" id="IPR002312">
    <property type="entry name" value="Asp/Asn-tRNA-synth_IIb"/>
</dbReference>
<dbReference type="InterPro" id="IPR047090">
    <property type="entry name" value="AspRS_core"/>
</dbReference>
<dbReference type="InterPro" id="IPR004115">
    <property type="entry name" value="GAD-like_sf"/>
</dbReference>
<dbReference type="InterPro" id="IPR012340">
    <property type="entry name" value="NA-bd_OB-fold"/>
</dbReference>
<dbReference type="InterPro" id="IPR004365">
    <property type="entry name" value="NA-bd_OB_tRNA"/>
</dbReference>
<dbReference type="NCBIfam" id="TIGR00459">
    <property type="entry name" value="aspS_bact"/>
    <property type="match status" value="1"/>
</dbReference>
<dbReference type="NCBIfam" id="NF001750">
    <property type="entry name" value="PRK00476.1"/>
    <property type="match status" value="1"/>
</dbReference>
<dbReference type="PANTHER" id="PTHR22594:SF5">
    <property type="entry name" value="ASPARTATE--TRNA LIGASE, MITOCHONDRIAL"/>
    <property type="match status" value="1"/>
</dbReference>
<dbReference type="PANTHER" id="PTHR22594">
    <property type="entry name" value="ASPARTYL/LYSYL-TRNA SYNTHETASE"/>
    <property type="match status" value="1"/>
</dbReference>
<dbReference type="Pfam" id="PF00152">
    <property type="entry name" value="tRNA-synt_2"/>
    <property type="match status" value="1"/>
</dbReference>
<dbReference type="Pfam" id="PF01336">
    <property type="entry name" value="tRNA_anti-codon"/>
    <property type="match status" value="1"/>
</dbReference>
<dbReference type="PRINTS" id="PR01042">
    <property type="entry name" value="TRNASYNTHASP"/>
</dbReference>
<dbReference type="SUPFAM" id="SSF55681">
    <property type="entry name" value="Class II aaRS and biotin synthetases"/>
    <property type="match status" value="1"/>
</dbReference>
<dbReference type="SUPFAM" id="SSF50249">
    <property type="entry name" value="Nucleic acid-binding proteins"/>
    <property type="match status" value="1"/>
</dbReference>
<dbReference type="PROSITE" id="PS50862">
    <property type="entry name" value="AA_TRNA_LIGASE_II"/>
    <property type="match status" value="1"/>
</dbReference>
<evidence type="ECO:0000250" key="1"/>
<evidence type="ECO:0000269" key="2">
    <source>
    </source>
</evidence>
<evidence type="ECO:0000269" key="3">
    <source>
    </source>
</evidence>
<evidence type="ECO:0000305" key="4"/>
<evidence type="ECO:0000305" key="5">
    <source>
    </source>
</evidence>
<feature type="chain" id="PRO_0000111015" description="Aspartate--tRNA ligase, mitochondrial">
    <location>
        <begin position="1"/>
        <end position="658"/>
    </location>
</feature>
<feature type="region of interest" description="Aspartate" evidence="1">
    <location>
        <begin position="226"/>
        <end position="229"/>
    </location>
</feature>
<feature type="binding site" evidence="1">
    <location>
        <position position="198"/>
    </location>
    <ligand>
        <name>L-aspartate</name>
        <dbReference type="ChEBI" id="CHEBI:29991"/>
    </ligand>
</feature>
<feature type="binding site" evidence="1">
    <location>
        <begin position="248"/>
        <end position="250"/>
    </location>
    <ligand>
        <name>ATP</name>
        <dbReference type="ChEBI" id="CHEBI:30616"/>
    </ligand>
</feature>
<feature type="binding site" evidence="1">
    <location>
        <position position="248"/>
    </location>
    <ligand>
        <name>L-aspartate</name>
        <dbReference type="ChEBI" id="CHEBI:29991"/>
    </ligand>
</feature>
<feature type="binding site" evidence="1">
    <location>
        <position position="553"/>
    </location>
    <ligand>
        <name>ATP</name>
        <dbReference type="ChEBI" id="CHEBI:30616"/>
    </ligand>
</feature>
<feature type="binding site" evidence="1">
    <location>
        <position position="560"/>
    </location>
    <ligand>
        <name>L-aspartate</name>
        <dbReference type="ChEBI" id="CHEBI:29991"/>
    </ligand>
</feature>
<feature type="binding site" evidence="1">
    <location>
        <begin position="604"/>
        <end position="607"/>
    </location>
    <ligand>
        <name>ATP</name>
        <dbReference type="ChEBI" id="CHEBI:30616"/>
    </ligand>
</feature>
<keyword id="KW-0030">Aminoacyl-tRNA synthetase</keyword>
<keyword id="KW-0067">ATP-binding</keyword>
<keyword id="KW-0436">Ligase</keyword>
<keyword id="KW-0496">Mitochondrion</keyword>
<keyword id="KW-0547">Nucleotide-binding</keyword>
<keyword id="KW-0648">Protein biosynthesis</keyword>
<keyword id="KW-1185">Reference proteome</keyword>
<protein>
    <recommendedName>
        <fullName>Aspartate--tRNA ligase, mitochondrial</fullName>
        <ecNumber evidence="5">6.1.1.12</ecNumber>
    </recommendedName>
    <alternativeName>
        <fullName>Aspartyl-tRNA synthetase</fullName>
        <shortName>AspRS</shortName>
    </alternativeName>
</protein>
<gene>
    <name type="primary">MSD1</name>
    <name type="ordered locus">YPL104W</name>
    <name type="ORF">LPG5W</name>
</gene>
<accession>P15179</accession>
<accession>D6W3R3</accession>
<organism>
    <name type="scientific">Saccharomyces cerevisiae (strain ATCC 204508 / S288c)</name>
    <name type="common">Baker's yeast</name>
    <dbReference type="NCBI Taxonomy" id="559292"/>
    <lineage>
        <taxon>Eukaryota</taxon>
        <taxon>Fungi</taxon>
        <taxon>Dikarya</taxon>
        <taxon>Ascomycota</taxon>
        <taxon>Saccharomycotina</taxon>
        <taxon>Saccharomycetes</taxon>
        <taxon>Saccharomycetales</taxon>
        <taxon>Saccharomycetaceae</taxon>
        <taxon>Saccharomyces</taxon>
    </lineage>
</organism>
<reference key="1">
    <citation type="journal article" date="1989" name="Proc. Natl. Acad. Sci. U.S.A.">
        <title>Homology of aspartyl- and lysyl-tRNA synthetases.</title>
        <authorList>
            <person name="Gampel A."/>
            <person name="Tzagoloff A."/>
        </authorList>
    </citation>
    <scope>NUCLEOTIDE SEQUENCE [GENOMIC DNA]</scope>
    <scope>FUNCTION</scope>
    <scope>CATALYTIC ACTIVITY</scope>
</reference>
<reference key="2">
    <citation type="journal article" date="1997" name="Nature">
        <title>The nucleotide sequence of Saccharomyces cerevisiae chromosome XVI.</title>
        <authorList>
            <person name="Bussey H."/>
            <person name="Storms R.K."/>
            <person name="Ahmed A."/>
            <person name="Albermann K."/>
            <person name="Allen E."/>
            <person name="Ansorge W."/>
            <person name="Araujo R."/>
            <person name="Aparicio A."/>
            <person name="Barrell B.G."/>
            <person name="Badcock K."/>
            <person name="Benes V."/>
            <person name="Botstein D."/>
            <person name="Bowman S."/>
            <person name="Brueckner M."/>
            <person name="Carpenter J."/>
            <person name="Cherry J.M."/>
            <person name="Chung E."/>
            <person name="Churcher C.M."/>
            <person name="Coster F."/>
            <person name="Davis K."/>
            <person name="Davis R.W."/>
            <person name="Dietrich F.S."/>
            <person name="Delius H."/>
            <person name="DiPaolo T."/>
            <person name="Dubois E."/>
            <person name="Duesterhoeft A."/>
            <person name="Duncan M."/>
            <person name="Floeth M."/>
            <person name="Fortin N."/>
            <person name="Friesen J.D."/>
            <person name="Fritz C."/>
            <person name="Goffeau A."/>
            <person name="Hall J."/>
            <person name="Hebling U."/>
            <person name="Heumann K."/>
            <person name="Hilbert H."/>
            <person name="Hillier L.W."/>
            <person name="Hunicke-Smith S."/>
            <person name="Hyman R.W."/>
            <person name="Johnston M."/>
            <person name="Kalman S."/>
            <person name="Kleine K."/>
            <person name="Komp C."/>
            <person name="Kurdi O."/>
            <person name="Lashkari D."/>
            <person name="Lew H."/>
            <person name="Lin A."/>
            <person name="Lin D."/>
            <person name="Louis E.J."/>
            <person name="Marathe R."/>
            <person name="Messenguy F."/>
            <person name="Mewes H.-W."/>
            <person name="Mirtipati S."/>
            <person name="Moestl D."/>
            <person name="Mueller-Auer S."/>
            <person name="Namath A."/>
            <person name="Nentwich U."/>
            <person name="Oefner P."/>
            <person name="Pearson D."/>
            <person name="Petel F.X."/>
            <person name="Pohl T.M."/>
            <person name="Purnelle B."/>
            <person name="Rajandream M.A."/>
            <person name="Rechmann S."/>
            <person name="Rieger M."/>
            <person name="Riles L."/>
            <person name="Roberts D."/>
            <person name="Schaefer M."/>
            <person name="Scharfe M."/>
            <person name="Scherens B."/>
            <person name="Schramm S."/>
            <person name="Schroeder M."/>
            <person name="Sdicu A.-M."/>
            <person name="Tettelin H."/>
            <person name="Urrestarazu L.A."/>
            <person name="Ushinsky S."/>
            <person name="Vierendeels F."/>
            <person name="Vissers S."/>
            <person name="Voss H."/>
            <person name="Walsh S.V."/>
            <person name="Wambutt R."/>
            <person name="Wang Y."/>
            <person name="Wedler E."/>
            <person name="Wedler H."/>
            <person name="Winnett E."/>
            <person name="Zhong W.-W."/>
            <person name="Zollner A."/>
            <person name="Vo D.H."/>
            <person name="Hani J."/>
        </authorList>
    </citation>
    <scope>NUCLEOTIDE SEQUENCE [LARGE SCALE GENOMIC DNA]</scope>
    <source>
        <strain>ATCC 204508 / S288c</strain>
    </source>
</reference>
<reference key="3">
    <citation type="journal article" date="2014" name="G3 (Bethesda)">
        <title>The reference genome sequence of Saccharomyces cerevisiae: Then and now.</title>
        <authorList>
            <person name="Engel S.R."/>
            <person name="Dietrich F.S."/>
            <person name="Fisk D.G."/>
            <person name="Binkley G."/>
            <person name="Balakrishnan R."/>
            <person name="Costanzo M.C."/>
            <person name="Dwight S.S."/>
            <person name="Hitz B.C."/>
            <person name="Karra K."/>
            <person name="Nash R.S."/>
            <person name="Weng S."/>
            <person name="Wong E.D."/>
            <person name="Lloyd P."/>
            <person name="Skrzypek M.S."/>
            <person name="Miyasato S.R."/>
            <person name="Simison M."/>
            <person name="Cherry J.M."/>
        </authorList>
    </citation>
    <scope>GENOME REANNOTATION</scope>
    <source>
        <strain>ATCC 204508 / S288c</strain>
    </source>
</reference>
<reference key="4">
    <citation type="journal article" date="2003" name="Nature">
        <title>Global analysis of protein expression in yeast.</title>
        <authorList>
            <person name="Ghaemmaghami S."/>
            <person name="Huh W.-K."/>
            <person name="Bower K."/>
            <person name="Howson R.W."/>
            <person name="Belle A."/>
            <person name="Dephoure N."/>
            <person name="O'Shea E.K."/>
            <person name="Weissman J.S."/>
        </authorList>
    </citation>
    <scope>LEVEL OF PROTEIN EXPRESSION [LARGE SCALE ANALYSIS]</scope>
</reference>
<name>SYDM_YEAST</name>